<keyword id="KW-0066">ATP synthesis</keyword>
<keyword id="KW-0997">Cell inner membrane</keyword>
<keyword id="KW-1003">Cell membrane</keyword>
<keyword id="KW-0139">CF(1)</keyword>
<keyword id="KW-0375">Hydrogen ion transport</keyword>
<keyword id="KW-0406">Ion transport</keyword>
<keyword id="KW-0472">Membrane</keyword>
<keyword id="KW-0813">Transport</keyword>
<comment type="function">
    <text evidence="1">Produces ATP from ADP in the presence of a proton gradient across the membrane.</text>
</comment>
<comment type="subunit">
    <text evidence="1">F-type ATPases have 2 components, CF(1) - the catalytic core - and CF(0) - the membrane proton channel. CF(1) has five subunits: alpha(3), beta(3), gamma(1), delta(1), epsilon(1). CF(0) has three main subunits: a, b and c.</text>
</comment>
<comment type="subcellular location">
    <subcellularLocation>
        <location evidence="1">Cell inner membrane</location>
        <topology evidence="1">Peripheral membrane protein</topology>
    </subcellularLocation>
</comment>
<comment type="similarity">
    <text evidence="1">Belongs to the ATPase epsilon chain family.</text>
</comment>
<organism>
    <name type="scientific">Coxiella burnetii (strain Dugway 5J108-111)</name>
    <dbReference type="NCBI Taxonomy" id="434922"/>
    <lineage>
        <taxon>Bacteria</taxon>
        <taxon>Pseudomonadati</taxon>
        <taxon>Pseudomonadota</taxon>
        <taxon>Gammaproteobacteria</taxon>
        <taxon>Legionellales</taxon>
        <taxon>Coxiellaceae</taxon>
        <taxon>Coxiella</taxon>
    </lineage>
</organism>
<proteinExistence type="inferred from homology"/>
<feature type="chain" id="PRO_1000081727" description="ATP synthase epsilon chain">
    <location>
        <begin position="1"/>
        <end position="142"/>
    </location>
</feature>
<dbReference type="EMBL" id="CP000733">
    <property type="protein sequence ID" value="ABS76779.1"/>
    <property type="molecule type" value="Genomic_DNA"/>
</dbReference>
<dbReference type="RefSeq" id="WP_005770045.1">
    <property type="nucleotide sequence ID" value="NC_009727.1"/>
</dbReference>
<dbReference type="SMR" id="A9KBF5"/>
<dbReference type="KEGG" id="cbd:CBUD_0174"/>
<dbReference type="HOGENOM" id="CLU_084338_2_0_6"/>
<dbReference type="Proteomes" id="UP000008555">
    <property type="component" value="Chromosome"/>
</dbReference>
<dbReference type="GO" id="GO:0005886">
    <property type="term" value="C:plasma membrane"/>
    <property type="evidence" value="ECO:0007669"/>
    <property type="project" value="UniProtKB-SubCell"/>
</dbReference>
<dbReference type="GO" id="GO:0045259">
    <property type="term" value="C:proton-transporting ATP synthase complex"/>
    <property type="evidence" value="ECO:0007669"/>
    <property type="project" value="UniProtKB-KW"/>
</dbReference>
<dbReference type="GO" id="GO:0005524">
    <property type="term" value="F:ATP binding"/>
    <property type="evidence" value="ECO:0007669"/>
    <property type="project" value="UniProtKB-UniRule"/>
</dbReference>
<dbReference type="GO" id="GO:0046933">
    <property type="term" value="F:proton-transporting ATP synthase activity, rotational mechanism"/>
    <property type="evidence" value="ECO:0007669"/>
    <property type="project" value="UniProtKB-UniRule"/>
</dbReference>
<dbReference type="CDD" id="cd12152">
    <property type="entry name" value="F1-ATPase_delta"/>
    <property type="match status" value="1"/>
</dbReference>
<dbReference type="FunFam" id="2.60.15.10:FF:000001">
    <property type="entry name" value="ATP synthase epsilon chain"/>
    <property type="match status" value="1"/>
</dbReference>
<dbReference type="Gene3D" id="1.20.5.440">
    <property type="entry name" value="ATP synthase delta/epsilon subunit, C-terminal domain"/>
    <property type="match status" value="1"/>
</dbReference>
<dbReference type="Gene3D" id="2.60.15.10">
    <property type="entry name" value="F0F1 ATP synthase delta/epsilon subunit, N-terminal"/>
    <property type="match status" value="1"/>
</dbReference>
<dbReference type="HAMAP" id="MF_00530">
    <property type="entry name" value="ATP_synth_epsil_bac"/>
    <property type="match status" value="1"/>
</dbReference>
<dbReference type="InterPro" id="IPR036794">
    <property type="entry name" value="ATP_F1_dsu/esu_C_sf"/>
</dbReference>
<dbReference type="InterPro" id="IPR001469">
    <property type="entry name" value="ATP_synth_F1_dsu/esu"/>
</dbReference>
<dbReference type="InterPro" id="IPR020546">
    <property type="entry name" value="ATP_synth_F1_dsu/esu_N"/>
</dbReference>
<dbReference type="InterPro" id="IPR020547">
    <property type="entry name" value="ATP_synth_F1_esu_C"/>
</dbReference>
<dbReference type="InterPro" id="IPR036771">
    <property type="entry name" value="ATPsynth_dsu/esu_N"/>
</dbReference>
<dbReference type="NCBIfam" id="TIGR01216">
    <property type="entry name" value="ATP_synt_epsi"/>
    <property type="match status" value="1"/>
</dbReference>
<dbReference type="NCBIfam" id="NF001847">
    <property type="entry name" value="PRK00571.1-4"/>
    <property type="match status" value="1"/>
</dbReference>
<dbReference type="PANTHER" id="PTHR13822">
    <property type="entry name" value="ATP SYNTHASE DELTA/EPSILON CHAIN"/>
    <property type="match status" value="1"/>
</dbReference>
<dbReference type="PANTHER" id="PTHR13822:SF10">
    <property type="entry name" value="ATP SYNTHASE EPSILON CHAIN, CHLOROPLASTIC"/>
    <property type="match status" value="1"/>
</dbReference>
<dbReference type="Pfam" id="PF00401">
    <property type="entry name" value="ATP-synt_DE"/>
    <property type="match status" value="1"/>
</dbReference>
<dbReference type="Pfam" id="PF02823">
    <property type="entry name" value="ATP-synt_DE_N"/>
    <property type="match status" value="1"/>
</dbReference>
<dbReference type="SUPFAM" id="SSF46604">
    <property type="entry name" value="Epsilon subunit of F1F0-ATP synthase C-terminal domain"/>
    <property type="match status" value="1"/>
</dbReference>
<dbReference type="SUPFAM" id="SSF51344">
    <property type="entry name" value="Epsilon subunit of F1F0-ATP synthase N-terminal domain"/>
    <property type="match status" value="1"/>
</dbReference>
<reference key="1">
    <citation type="journal article" date="2009" name="Infect. Immun.">
        <title>Comparative genomics reveal extensive transposon-mediated genomic plasticity and diversity among potential effector proteins within the genus Coxiella.</title>
        <authorList>
            <person name="Beare P.A."/>
            <person name="Unsworth N."/>
            <person name="Andoh M."/>
            <person name="Voth D.E."/>
            <person name="Omsland A."/>
            <person name="Gilk S.D."/>
            <person name="Williams K.P."/>
            <person name="Sobral B.W."/>
            <person name="Kupko J.J. III"/>
            <person name="Porcella S.F."/>
            <person name="Samuel J.E."/>
            <person name="Heinzen R.A."/>
        </authorList>
    </citation>
    <scope>NUCLEOTIDE SEQUENCE [LARGE SCALE GENOMIC DNA]</scope>
    <source>
        <strain>Dugway 5J108-111</strain>
    </source>
</reference>
<sequence length="142" mass="15287">MAKTMQLEIVSAEAAIFSGKVEMIVVTGGMGELGIYPGHRQLLTSLKPGQIKAILEGGKEEVFYMSGGMLEVQPEIVTILADTALRAVDLDEAAAISAKEEAERRLAKQKAGIEYSKAMTELAEAAAQLRAIQMLRKSAKKH</sequence>
<accession>A9KBF5</accession>
<name>ATPE_COXBN</name>
<evidence type="ECO:0000255" key="1">
    <source>
        <dbReference type="HAMAP-Rule" id="MF_00530"/>
    </source>
</evidence>
<protein>
    <recommendedName>
        <fullName evidence="1">ATP synthase epsilon chain</fullName>
    </recommendedName>
    <alternativeName>
        <fullName evidence="1">ATP synthase F1 sector epsilon subunit</fullName>
    </alternativeName>
    <alternativeName>
        <fullName evidence="1">F-ATPase epsilon subunit</fullName>
    </alternativeName>
</protein>
<gene>
    <name evidence="1" type="primary">atpC</name>
    <name type="ordered locus">CBUD_0174</name>
</gene>